<sequence length="98" mass="11586">MEKHPADLYKDHVRPFLYSKLEEFKILGYDDVELESLWSYLTDKKWKKKTELSIYELASDILSVKIGEFMNYATVESFKTSNWLGSEEGQEALEELLR</sequence>
<reference key="1">
    <citation type="journal article" date="1997" name="Nature">
        <title>The complete genome sequence of the Gram-positive bacterium Bacillus subtilis.</title>
        <authorList>
            <person name="Kunst F."/>
            <person name="Ogasawara N."/>
            <person name="Moszer I."/>
            <person name="Albertini A.M."/>
            <person name="Alloni G."/>
            <person name="Azevedo V."/>
            <person name="Bertero M.G."/>
            <person name="Bessieres P."/>
            <person name="Bolotin A."/>
            <person name="Borchert S."/>
            <person name="Borriss R."/>
            <person name="Boursier L."/>
            <person name="Brans A."/>
            <person name="Braun M."/>
            <person name="Brignell S.C."/>
            <person name="Bron S."/>
            <person name="Brouillet S."/>
            <person name="Bruschi C.V."/>
            <person name="Caldwell B."/>
            <person name="Capuano V."/>
            <person name="Carter N.M."/>
            <person name="Choi S.-K."/>
            <person name="Codani J.-J."/>
            <person name="Connerton I.F."/>
            <person name="Cummings N.J."/>
            <person name="Daniel R.A."/>
            <person name="Denizot F."/>
            <person name="Devine K.M."/>
            <person name="Duesterhoeft A."/>
            <person name="Ehrlich S.D."/>
            <person name="Emmerson P.T."/>
            <person name="Entian K.-D."/>
            <person name="Errington J."/>
            <person name="Fabret C."/>
            <person name="Ferrari E."/>
            <person name="Foulger D."/>
            <person name="Fritz C."/>
            <person name="Fujita M."/>
            <person name="Fujita Y."/>
            <person name="Fuma S."/>
            <person name="Galizzi A."/>
            <person name="Galleron N."/>
            <person name="Ghim S.-Y."/>
            <person name="Glaser P."/>
            <person name="Goffeau A."/>
            <person name="Golightly E.J."/>
            <person name="Grandi G."/>
            <person name="Guiseppi G."/>
            <person name="Guy B.J."/>
            <person name="Haga K."/>
            <person name="Haiech J."/>
            <person name="Harwood C.R."/>
            <person name="Henaut A."/>
            <person name="Hilbert H."/>
            <person name="Holsappel S."/>
            <person name="Hosono S."/>
            <person name="Hullo M.-F."/>
            <person name="Itaya M."/>
            <person name="Jones L.-M."/>
            <person name="Joris B."/>
            <person name="Karamata D."/>
            <person name="Kasahara Y."/>
            <person name="Klaerr-Blanchard M."/>
            <person name="Klein C."/>
            <person name="Kobayashi Y."/>
            <person name="Koetter P."/>
            <person name="Koningstein G."/>
            <person name="Krogh S."/>
            <person name="Kumano M."/>
            <person name="Kurita K."/>
            <person name="Lapidus A."/>
            <person name="Lardinois S."/>
            <person name="Lauber J."/>
            <person name="Lazarevic V."/>
            <person name="Lee S.-M."/>
            <person name="Levine A."/>
            <person name="Liu H."/>
            <person name="Masuda S."/>
            <person name="Mauel C."/>
            <person name="Medigue C."/>
            <person name="Medina N."/>
            <person name="Mellado R.P."/>
            <person name="Mizuno M."/>
            <person name="Moestl D."/>
            <person name="Nakai S."/>
            <person name="Noback M."/>
            <person name="Noone D."/>
            <person name="O'Reilly M."/>
            <person name="Ogawa K."/>
            <person name="Ogiwara A."/>
            <person name="Oudega B."/>
            <person name="Park S.-H."/>
            <person name="Parro V."/>
            <person name="Pohl T.M."/>
            <person name="Portetelle D."/>
            <person name="Porwollik S."/>
            <person name="Prescott A.M."/>
            <person name="Presecan E."/>
            <person name="Pujic P."/>
            <person name="Purnelle B."/>
            <person name="Rapoport G."/>
            <person name="Rey M."/>
            <person name="Reynolds S."/>
            <person name="Rieger M."/>
            <person name="Rivolta C."/>
            <person name="Rocha E."/>
            <person name="Roche B."/>
            <person name="Rose M."/>
            <person name="Sadaie Y."/>
            <person name="Sato T."/>
            <person name="Scanlan E."/>
            <person name="Schleich S."/>
            <person name="Schroeter R."/>
            <person name="Scoffone F."/>
            <person name="Sekiguchi J."/>
            <person name="Sekowska A."/>
            <person name="Seror S.J."/>
            <person name="Serror P."/>
            <person name="Shin B.-S."/>
            <person name="Soldo B."/>
            <person name="Sorokin A."/>
            <person name="Tacconi E."/>
            <person name="Takagi T."/>
            <person name="Takahashi H."/>
            <person name="Takemaru K."/>
            <person name="Takeuchi M."/>
            <person name="Tamakoshi A."/>
            <person name="Tanaka T."/>
            <person name="Terpstra P."/>
            <person name="Tognoni A."/>
            <person name="Tosato V."/>
            <person name="Uchiyama S."/>
            <person name="Vandenbol M."/>
            <person name="Vannier F."/>
            <person name="Vassarotti A."/>
            <person name="Viari A."/>
            <person name="Wambutt R."/>
            <person name="Wedler E."/>
            <person name="Wedler H."/>
            <person name="Weitzenegger T."/>
            <person name="Winters P."/>
            <person name="Wipat A."/>
            <person name="Yamamoto H."/>
            <person name="Yamane K."/>
            <person name="Yasumoto K."/>
            <person name="Yata K."/>
            <person name="Yoshida K."/>
            <person name="Yoshikawa H.-F."/>
            <person name="Zumstein E."/>
            <person name="Yoshikawa H."/>
            <person name="Danchin A."/>
        </authorList>
    </citation>
    <scope>NUCLEOTIDE SEQUENCE [LARGE SCALE GENOMIC DNA]</scope>
    <source>
        <strain>168</strain>
    </source>
</reference>
<reference key="2">
    <citation type="journal article" date="2009" name="J. Bacteriol.">
        <title>The Bacillus subtilis late competence operon comE is transcriptionally regulated by yutB and under post-transcription initiation control by comN (yrzD).</title>
        <authorList>
            <person name="Ogura M."/>
            <person name="Tanaka T."/>
        </authorList>
    </citation>
    <scope>FUNCTION</scope>
    <scope>DISRUPTION PHENOTYPE</scope>
    <scope>GENE NAME</scope>
    <source>
        <strain>168</strain>
    </source>
</reference>
<reference key="3">
    <citation type="journal article" date="2012" name="J. Bacteriol.">
        <title>DivIVA-mediated polar localization of ComN, a posttranscriptional regulator of Bacillus subtilis.</title>
        <authorList>
            <person name="Dos Santos V.T."/>
            <person name="Bisson-Filho A.W."/>
            <person name="Gueiros-Filho F.J."/>
        </authorList>
    </citation>
    <scope>FUNCTION</scope>
    <scope>INTERACTION WITH DIVIVA</scope>
    <scope>SUBCELLULAR LOCATION</scope>
    <scope>DISRUPTION PHENOTYPE</scope>
    <source>
        <strain>168 / PY79</strain>
    </source>
</reference>
<protein>
    <recommendedName>
        <fullName>Post-transcriptional regulator ComN</fullName>
    </recommendedName>
</protein>
<gene>
    <name type="primary">comN</name>
    <name type="synonym">yrzD</name>
    <name type="ordered locus">BSU27660</name>
</gene>
<accession>O32049</accession>
<comment type="function">
    <text evidence="1 2">Required for post-transcription initiation control of the comE operon. Promotes the accumulation of its target comE mRNA to septal and polar sites.</text>
</comment>
<comment type="subunit">
    <text evidence="2">Interacts directly with DivIVA.</text>
</comment>
<comment type="interaction">
    <interactant intactId="EBI-6418652">
        <id>O32049</id>
    </interactant>
    <interactant intactId="EBI-5243654">
        <id>P71021</id>
        <label>divIVA</label>
    </interactant>
    <organismsDiffer>false</organismsDiffer>
    <experiments>4</experiments>
</comment>
<comment type="subcellular location">
    <subcellularLocation>
        <location evidence="2">Cytoplasm</location>
    </subcellularLocation>
    <text>Localizes to the division site and cell poles, in a DivIVA-dependent manner. Polar localization is not essential for competence development.</text>
</comment>
<comment type="disruption phenotype">
    <text evidence="1 2">Disruption results in severely reduced transformation frequency, but has no detectable effect on either the frequency or the location of division septa.</text>
</comment>
<feature type="chain" id="PRO_0000360745" description="Post-transcriptional regulator ComN">
    <location>
        <begin position="1"/>
        <end position="98"/>
    </location>
</feature>
<organism>
    <name type="scientific">Bacillus subtilis (strain 168)</name>
    <dbReference type="NCBI Taxonomy" id="224308"/>
    <lineage>
        <taxon>Bacteria</taxon>
        <taxon>Bacillati</taxon>
        <taxon>Bacillota</taxon>
        <taxon>Bacilli</taxon>
        <taxon>Bacillales</taxon>
        <taxon>Bacillaceae</taxon>
        <taxon>Bacillus</taxon>
    </lineage>
</organism>
<proteinExistence type="evidence at protein level"/>
<name>COMN_BACSU</name>
<keyword id="KW-0178">Competence</keyword>
<keyword id="KW-0963">Cytoplasm</keyword>
<keyword id="KW-1185">Reference proteome</keyword>
<dbReference type="EMBL" id="AL009126">
    <property type="protein sequence ID" value="CAB14726.1"/>
    <property type="molecule type" value="Genomic_DNA"/>
</dbReference>
<dbReference type="PIR" id="C69982">
    <property type="entry name" value="C69982"/>
</dbReference>
<dbReference type="RefSeq" id="NP_390644.1">
    <property type="nucleotide sequence ID" value="NC_000964.3"/>
</dbReference>
<dbReference type="RefSeq" id="WP_004398498.1">
    <property type="nucleotide sequence ID" value="NZ_OZ025638.1"/>
</dbReference>
<dbReference type="SMR" id="O32049"/>
<dbReference type="FunCoup" id="O32049">
    <property type="interactions" value="30"/>
</dbReference>
<dbReference type="IntAct" id="O32049">
    <property type="interactions" value="1"/>
</dbReference>
<dbReference type="STRING" id="224308.BSU27660"/>
<dbReference type="PaxDb" id="224308-BSU27660"/>
<dbReference type="EnsemblBacteria" id="CAB14726">
    <property type="protein sequence ID" value="CAB14726"/>
    <property type="gene ID" value="BSU_27660"/>
</dbReference>
<dbReference type="GeneID" id="937536"/>
<dbReference type="KEGG" id="bsu:BSU27660"/>
<dbReference type="PATRIC" id="fig|224308.179.peg.3005"/>
<dbReference type="eggNOG" id="ENOG503318Y">
    <property type="taxonomic scope" value="Bacteria"/>
</dbReference>
<dbReference type="InParanoid" id="O32049"/>
<dbReference type="OrthoDB" id="2990595at2"/>
<dbReference type="PhylomeDB" id="O32049"/>
<dbReference type="BioCyc" id="BSUB:BSU27660-MONOMER"/>
<dbReference type="Proteomes" id="UP000001570">
    <property type="component" value="Chromosome"/>
</dbReference>
<dbReference type="GO" id="GO:0005737">
    <property type="term" value="C:cytoplasm"/>
    <property type="evidence" value="ECO:0007669"/>
    <property type="project" value="UniProtKB-SubCell"/>
</dbReference>
<dbReference type="GO" id="GO:0030420">
    <property type="term" value="P:establishment of competence for transformation"/>
    <property type="evidence" value="ECO:0007669"/>
    <property type="project" value="UniProtKB-KW"/>
</dbReference>
<dbReference type="InterPro" id="IPR025716">
    <property type="entry name" value="Post-transcriptional_regulator"/>
</dbReference>
<dbReference type="Pfam" id="PF13797">
    <property type="entry name" value="Post_transc_reg"/>
    <property type="match status" value="1"/>
</dbReference>
<evidence type="ECO:0000269" key="1">
    <source>
    </source>
</evidence>
<evidence type="ECO:0000269" key="2">
    <source>
    </source>
</evidence>